<reference key="1">
    <citation type="journal article" date="1998" name="DNA Res.">
        <title>Complete sequence and gene organization of the genome of a hyper-thermophilic archaebacterium, Pyrococcus horikoshii OT3.</title>
        <authorList>
            <person name="Kawarabayasi Y."/>
            <person name="Sawada M."/>
            <person name="Horikawa H."/>
            <person name="Haikawa Y."/>
            <person name="Hino Y."/>
            <person name="Yamamoto S."/>
            <person name="Sekine M."/>
            <person name="Baba S."/>
            <person name="Kosugi H."/>
            <person name="Hosoyama A."/>
            <person name="Nagai Y."/>
            <person name="Sakai M."/>
            <person name="Ogura K."/>
            <person name="Otsuka R."/>
            <person name="Nakazawa H."/>
            <person name="Takamiya M."/>
            <person name="Ohfuku Y."/>
            <person name="Funahashi T."/>
            <person name="Tanaka T."/>
            <person name="Kudoh Y."/>
            <person name="Yamazaki J."/>
            <person name="Kushida N."/>
            <person name="Oguchi A."/>
            <person name="Aoki K."/>
            <person name="Yoshizawa T."/>
            <person name="Nakamura Y."/>
            <person name="Robb F.T."/>
            <person name="Horikoshi K."/>
            <person name="Masuchi Y."/>
            <person name="Shizuya H."/>
            <person name="Kikuchi H."/>
        </authorList>
    </citation>
    <scope>NUCLEOTIDE SEQUENCE [LARGE SCALE GENOMIC DNA]</scope>
    <source>
        <strain>ATCC 700860 / DSM 12428 / JCM 9974 / NBRC 100139 / OT-3</strain>
    </source>
</reference>
<keyword id="KW-0067">ATP-binding</keyword>
<keyword id="KW-0460">Magnesium</keyword>
<keyword id="KW-0547">Nucleotide-binding</keyword>
<keyword id="KW-0554">One-carbon metabolism</keyword>
<keyword id="KW-0808">Transferase</keyword>
<gene>
    <name type="primary">mat</name>
    <name type="ordered locus">PH1824</name>
</gene>
<dbReference type="EC" id="2.5.1.6"/>
<dbReference type="EMBL" id="BA000001">
    <property type="protein sequence ID" value="BAA30943.1"/>
    <property type="status" value="ALT_INIT"/>
    <property type="molecule type" value="Genomic_DNA"/>
</dbReference>
<dbReference type="PIR" id="H71193">
    <property type="entry name" value="H71193"/>
</dbReference>
<dbReference type="RefSeq" id="WP_048053486.1">
    <property type="nucleotide sequence ID" value="NC_000961.1"/>
</dbReference>
<dbReference type="SMR" id="O59488"/>
<dbReference type="STRING" id="70601.gene:9378826"/>
<dbReference type="EnsemblBacteria" id="BAA30943">
    <property type="protein sequence ID" value="BAA30943"/>
    <property type="gene ID" value="BAA30943"/>
</dbReference>
<dbReference type="GeneID" id="1442665"/>
<dbReference type="KEGG" id="pho:PH1824"/>
<dbReference type="eggNOG" id="arCOG01678">
    <property type="taxonomic scope" value="Archaea"/>
</dbReference>
<dbReference type="OrthoDB" id="204488at2157"/>
<dbReference type="UniPathway" id="UPA00315">
    <property type="reaction ID" value="UER00080"/>
</dbReference>
<dbReference type="Proteomes" id="UP000000752">
    <property type="component" value="Chromosome"/>
</dbReference>
<dbReference type="GO" id="GO:0005524">
    <property type="term" value="F:ATP binding"/>
    <property type="evidence" value="ECO:0007669"/>
    <property type="project" value="UniProtKB-UniRule"/>
</dbReference>
<dbReference type="GO" id="GO:0000287">
    <property type="term" value="F:magnesium ion binding"/>
    <property type="evidence" value="ECO:0007669"/>
    <property type="project" value="UniProtKB-UniRule"/>
</dbReference>
<dbReference type="GO" id="GO:0004478">
    <property type="term" value="F:methionine adenosyltransferase activity"/>
    <property type="evidence" value="ECO:0007669"/>
    <property type="project" value="UniProtKB-UniRule"/>
</dbReference>
<dbReference type="GO" id="GO:0006730">
    <property type="term" value="P:one-carbon metabolic process"/>
    <property type="evidence" value="ECO:0007669"/>
    <property type="project" value="UniProtKB-KW"/>
</dbReference>
<dbReference type="GO" id="GO:0006556">
    <property type="term" value="P:S-adenosylmethionine biosynthetic process"/>
    <property type="evidence" value="ECO:0007669"/>
    <property type="project" value="UniProtKB-UniRule"/>
</dbReference>
<dbReference type="Gene3D" id="3.30.300.10">
    <property type="match status" value="1"/>
</dbReference>
<dbReference type="Gene3D" id="3.30.300.280">
    <property type="entry name" value="S-adenosylmethionine synthetase, C-terminal domain"/>
    <property type="match status" value="2"/>
</dbReference>
<dbReference type="HAMAP" id="MF_00136">
    <property type="entry name" value="S_AdoMet_synth2"/>
    <property type="match status" value="1"/>
</dbReference>
<dbReference type="InterPro" id="IPR027790">
    <property type="entry name" value="AdoMet_synthase_2_family"/>
</dbReference>
<dbReference type="InterPro" id="IPR042544">
    <property type="entry name" value="AdoMet_synthase_3"/>
</dbReference>
<dbReference type="InterPro" id="IPR002795">
    <property type="entry name" value="S-AdoMet_synthetase_arc"/>
</dbReference>
<dbReference type="NCBIfam" id="NF003364">
    <property type="entry name" value="PRK04439.1-3"/>
    <property type="match status" value="1"/>
</dbReference>
<dbReference type="NCBIfam" id="NF003366">
    <property type="entry name" value="PRK04439.1-5"/>
    <property type="match status" value="1"/>
</dbReference>
<dbReference type="PANTHER" id="PTHR36697">
    <property type="entry name" value="S-ADENOSYLMETHIONINE SYNTHASE"/>
    <property type="match status" value="1"/>
</dbReference>
<dbReference type="PANTHER" id="PTHR36697:SF1">
    <property type="entry name" value="S-ADENOSYLMETHIONINE SYNTHASE"/>
    <property type="match status" value="1"/>
</dbReference>
<dbReference type="Pfam" id="PF01941">
    <property type="entry name" value="AdoMet_Synthase"/>
    <property type="match status" value="1"/>
</dbReference>
<protein>
    <recommendedName>
        <fullName>S-adenosylmethionine synthase</fullName>
        <shortName>AdoMet synthase</shortName>
        <ecNumber>2.5.1.6</ecNumber>
    </recommendedName>
    <alternativeName>
        <fullName>Methionine adenosyltransferase</fullName>
    </alternativeName>
</protein>
<name>METK_PYRHO</name>
<comment type="function">
    <text evidence="1">Catalyzes the formation of S-adenosylmethionine from methionine and ATP.</text>
</comment>
<comment type="catalytic activity">
    <reaction>
        <text>L-methionine + ATP + H2O = S-adenosyl-L-methionine + phosphate + diphosphate</text>
        <dbReference type="Rhea" id="RHEA:21080"/>
        <dbReference type="ChEBI" id="CHEBI:15377"/>
        <dbReference type="ChEBI" id="CHEBI:30616"/>
        <dbReference type="ChEBI" id="CHEBI:33019"/>
        <dbReference type="ChEBI" id="CHEBI:43474"/>
        <dbReference type="ChEBI" id="CHEBI:57844"/>
        <dbReference type="ChEBI" id="CHEBI:59789"/>
        <dbReference type="EC" id="2.5.1.6"/>
    </reaction>
</comment>
<comment type="cofactor">
    <cofactor evidence="1">
        <name>Mg(2+)</name>
        <dbReference type="ChEBI" id="CHEBI:18420"/>
    </cofactor>
</comment>
<comment type="pathway">
    <text>Amino-acid biosynthesis; S-adenosyl-L-methionine biosynthesis; S-adenosyl-L-methionine from L-methionine: step 1/1.</text>
</comment>
<comment type="similarity">
    <text evidence="3">Belongs to the AdoMet synthase 2 family.</text>
</comment>
<comment type="sequence caution" evidence="3">
    <conflict type="erroneous initiation">
        <sequence resource="EMBL-CDS" id="BAA30943"/>
    </conflict>
</comment>
<sequence>MPRNIVVEEIVRTPVEMQKVELVERKGVGHPDSIADGIAEAVSRALSKEYIKRYGIILHHNTDQVEVVGGRAYPRFGGGEVVKPIYILLSGRAVELVDQELFPVHEVAIRAAKDYLNNTIRHLDVENHVVIDSRIGQGSVDLVSVFNKAKENPIPLANDTSFGVGFAPLTETERLVLETERLLNSEKFKKELPAVGEDVKVMGLRKGDEIDLTIAAAIVDSEVSGPKEYLEVKDKIREAVEELASDVTSRKVNVYVNTADDPDSGIFYITVTGTSAEAGDDGSVGRGNRVNGLITPNRHMSLEAAAGKNPVSHVGKIYNLLAMFIANEIAETLPVEEVYVRILSQIGKPIDQPLIASIQIIPKQGHSVKEFEKDAYAIADNWLANITKIQKMILEGKVSVF</sequence>
<organism>
    <name type="scientific">Pyrococcus horikoshii (strain ATCC 700860 / DSM 12428 / JCM 9974 / NBRC 100139 / OT-3)</name>
    <dbReference type="NCBI Taxonomy" id="70601"/>
    <lineage>
        <taxon>Archaea</taxon>
        <taxon>Methanobacteriati</taxon>
        <taxon>Methanobacteriota</taxon>
        <taxon>Thermococci</taxon>
        <taxon>Thermococcales</taxon>
        <taxon>Thermococcaceae</taxon>
        <taxon>Pyrococcus</taxon>
    </lineage>
</organism>
<evidence type="ECO:0000250" key="1"/>
<evidence type="ECO:0000255" key="2"/>
<evidence type="ECO:0000305" key="3"/>
<proteinExistence type="inferred from homology"/>
<accession>O59488</accession>
<feature type="chain" id="PRO_0000150038" description="S-adenosylmethionine synthase">
    <location>
        <begin position="1"/>
        <end position="401"/>
    </location>
</feature>
<feature type="binding site" evidence="2">
    <location>
        <begin position="136"/>
        <end position="141"/>
    </location>
    <ligand>
        <name>ATP</name>
        <dbReference type="ChEBI" id="CHEBI:30616"/>
    </ligand>
</feature>